<evidence type="ECO:0000250" key="1"/>
<evidence type="ECO:0000305" key="2"/>
<name>PEPX_BACAN</name>
<organism>
    <name type="scientific">Bacillus anthracis</name>
    <dbReference type="NCBI Taxonomy" id="1392"/>
    <lineage>
        <taxon>Bacteria</taxon>
        <taxon>Bacillati</taxon>
        <taxon>Bacillota</taxon>
        <taxon>Bacilli</taxon>
        <taxon>Bacillales</taxon>
        <taxon>Bacillaceae</taxon>
        <taxon>Bacillus</taxon>
        <taxon>Bacillus cereus group</taxon>
    </lineage>
</organism>
<keyword id="KW-0031">Aminopeptidase</keyword>
<keyword id="KW-0378">Hydrolase</keyword>
<keyword id="KW-0645">Protease</keyword>
<keyword id="KW-1185">Reference proteome</keyword>
<keyword id="KW-0720">Serine protease</keyword>
<reference key="1">
    <citation type="journal article" date="2003" name="Nature">
        <title>The genome sequence of Bacillus anthracis Ames and comparison to closely related bacteria.</title>
        <authorList>
            <person name="Read T.D."/>
            <person name="Peterson S.N."/>
            <person name="Tourasse N.J."/>
            <person name="Baillie L.W."/>
            <person name="Paulsen I.T."/>
            <person name="Nelson K.E."/>
            <person name="Tettelin H."/>
            <person name="Fouts D.E."/>
            <person name="Eisen J.A."/>
            <person name="Gill S.R."/>
            <person name="Holtzapple E.K."/>
            <person name="Okstad O.A."/>
            <person name="Helgason E."/>
            <person name="Rilstone J."/>
            <person name="Wu M."/>
            <person name="Kolonay J.F."/>
            <person name="Beanan M.J."/>
            <person name="Dodson R.J."/>
            <person name="Brinkac L.M."/>
            <person name="Gwinn M.L."/>
            <person name="DeBoy R.T."/>
            <person name="Madpu R."/>
            <person name="Daugherty S.C."/>
            <person name="Durkin A.S."/>
            <person name="Haft D.H."/>
            <person name="Nelson W.C."/>
            <person name="Peterson J.D."/>
            <person name="Pop M."/>
            <person name="Khouri H.M."/>
            <person name="Radune D."/>
            <person name="Benton J.L."/>
            <person name="Mahamoud Y."/>
            <person name="Jiang L."/>
            <person name="Hance I.R."/>
            <person name="Weidman J.F."/>
            <person name="Berry K.J."/>
            <person name="Plaut R.D."/>
            <person name="Wolf A.M."/>
            <person name="Watkins K.L."/>
            <person name="Nierman W.C."/>
            <person name="Hazen A."/>
            <person name="Cline R.T."/>
            <person name="Redmond C."/>
            <person name="Thwaite J.E."/>
            <person name="White O."/>
            <person name="Salzberg S.L."/>
            <person name="Thomason B."/>
            <person name="Friedlander A.M."/>
            <person name="Koehler T.M."/>
            <person name="Hanna P.C."/>
            <person name="Kolstoe A.-B."/>
            <person name="Fraser C.M."/>
        </authorList>
    </citation>
    <scope>NUCLEOTIDE SEQUENCE [LARGE SCALE GENOMIC DNA]</scope>
    <source>
        <strain>Ames / isolate Porton</strain>
    </source>
</reference>
<reference key="2">
    <citation type="journal article" date="2009" name="J. Bacteriol.">
        <title>The complete genome sequence of Bacillus anthracis Ames 'Ancestor'.</title>
        <authorList>
            <person name="Ravel J."/>
            <person name="Jiang L."/>
            <person name="Stanley S.T."/>
            <person name="Wilson M.R."/>
            <person name="Decker R.S."/>
            <person name="Read T.D."/>
            <person name="Worsham P."/>
            <person name="Keim P.S."/>
            <person name="Salzberg S.L."/>
            <person name="Fraser-Liggett C.M."/>
            <person name="Rasko D.A."/>
        </authorList>
    </citation>
    <scope>NUCLEOTIDE SEQUENCE [LARGE SCALE GENOMIC DNA]</scope>
    <source>
        <strain>Ames ancestor</strain>
    </source>
</reference>
<reference key="3">
    <citation type="submission" date="2004-01" db="EMBL/GenBank/DDBJ databases">
        <title>Complete genome sequence of Bacillus anthracis Sterne.</title>
        <authorList>
            <person name="Brettin T.S."/>
            <person name="Bruce D."/>
            <person name="Challacombe J.F."/>
            <person name="Gilna P."/>
            <person name="Han C."/>
            <person name="Hill K."/>
            <person name="Hitchcock P."/>
            <person name="Jackson P."/>
            <person name="Keim P."/>
            <person name="Longmire J."/>
            <person name="Lucas S."/>
            <person name="Okinaka R."/>
            <person name="Richardson P."/>
            <person name="Rubin E."/>
            <person name="Tice H."/>
        </authorList>
    </citation>
    <scope>NUCLEOTIDE SEQUENCE [LARGE SCALE GENOMIC DNA]</scope>
    <source>
        <strain>Sterne</strain>
    </source>
</reference>
<proteinExistence type="inferred from homology"/>
<sequence>MGKKKIATLSAILSLSITSGVSSTTAYADNKETNYINENDVKLNGKVSEALQSNMKIELENGMTKPIYSLDEAIIENLFVETEVDSDRDGKKDRVSVKVMRPKTDSNVKVPVIYEMSPYRAGLKDVPVYNVDEELYAYEGKPYGAVNLGSYGNYYVPRGYAVILGESIGTGKSEGCPTTGDEQEILGTKSVIDWVNGRAKAYKENGEEVKADWSTGNVGMTGVSYNGTLPNAVATTGVEGLKTIIPIAAISSWYDYYRANGAVIAPGGYQGEDTDNMAEAVLTRENPEVCGQVIKELTAGQDRKTGNYNDFWDKRNYVKDAKNVKASVFVVHGLNDWNVKTKQFAQWWEALGENNVPRKMWLHQGGHGGTSTNDWQRTQNKWFDYWLYGIENGIMNEPMVDVQRENKTWDKMKNWPDPSAVPSKVRMYLSNKAVNLPLSMGSVNKMFSFVDDAKMKSNQLVANPELEVANRLVYTMPVLQKDTRISGTPKISITGNIDRSVSNLTALLVDYGGAKPEIVTRGWMDPQNVKSIENSTAIQPGKDYTFTWDMQPDDYVFKAGHQIGVVLMASDYDYTIRPKAGTKLTVKLSEVTLPIVK</sequence>
<dbReference type="EC" id="3.4.14.11"/>
<dbReference type="EMBL" id="AE016879">
    <property type="protein sequence ID" value="AAP26688.1"/>
    <property type="molecule type" value="Genomic_DNA"/>
</dbReference>
<dbReference type="EMBL" id="AE017334">
    <property type="protein sequence ID" value="AAT31978.1"/>
    <property type="molecule type" value="Genomic_DNA"/>
</dbReference>
<dbReference type="EMBL" id="AE017225">
    <property type="protein sequence ID" value="AAT54976.1"/>
    <property type="molecule type" value="Genomic_DNA"/>
</dbReference>
<dbReference type="RefSeq" id="NP_845202.1">
    <property type="nucleotide sequence ID" value="NC_003997.3"/>
</dbReference>
<dbReference type="RefSeq" id="WP_000516719.1">
    <property type="nucleotide sequence ID" value="NZ_WXXJ01000020.1"/>
</dbReference>
<dbReference type="RefSeq" id="YP_028925.1">
    <property type="nucleotide sequence ID" value="NC_005945.1"/>
</dbReference>
<dbReference type="SMR" id="Q81PE9"/>
<dbReference type="IntAct" id="Q81PE9">
    <property type="interactions" value="1"/>
</dbReference>
<dbReference type="STRING" id="261594.GBAA_2860"/>
<dbReference type="ESTHER" id="baccr-pepx">
    <property type="family name" value="Lactobacillus_peptidase"/>
</dbReference>
<dbReference type="DNASU" id="1088416"/>
<dbReference type="GeneID" id="45022692"/>
<dbReference type="KEGG" id="ban:BA_2860"/>
<dbReference type="KEGG" id="bar:GBAA_2860"/>
<dbReference type="KEGG" id="bat:BAS2667"/>
<dbReference type="PATRIC" id="fig|198094.11.peg.2844"/>
<dbReference type="eggNOG" id="COG2936">
    <property type="taxonomic scope" value="Bacteria"/>
</dbReference>
<dbReference type="HOGENOM" id="CLU_011800_1_0_9"/>
<dbReference type="OMA" id="WDKIKNW"/>
<dbReference type="Proteomes" id="UP000000427">
    <property type="component" value="Chromosome"/>
</dbReference>
<dbReference type="Proteomes" id="UP000000594">
    <property type="component" value="Chromosome"/>
</dbReference>
<dbReference type="GO" id="GO:0004177">
    <property type="term" value="F:aminopeptidase activity"/>
    <property type="evidence" value="ECO:0007669"/>
    <property type="project" value="UniProtKB-KW"/>
</dbReference>
<dbReference type="GO" id="GO:0008239">
    <property type="term" value="F:dipeptidyl-peptidase activity"/>
    <property type="evidence" value="ECO:0007669"/>
    <property type="project" value="UniProtKB-EC"/>
</dbReference>
<dbReference type="GO" id="GO:0008236">
    <property type="term" value="F:serine-type peptidase activity"/>
    <property type="evidence" value="ECO:0007669"/>
    <property type="project" value="UniProtKB-KW"/>
</dbReference>
<dbReference type="GO" id="GO:0006508">
    <property type="term" value="P:proteolysis"/>
    <property type="evidence" value="ECO:0007669"/>
    <property type="project" value="UniProtKB-KW"/>
</dbReference>
<dbReference type="Gene3D" id="3.40.50.1820">
    <property type="entry name" value="alpha/beta hydrolase"/>
    <property type="match status" value="2"/>
</dbReference>
<dbReference type="Gene3D" id="2.60.120.260">
    <property type="entry name" value="Galactose-binding domain-like"/>
    <property type="match status" value="1"/>
</dbReference>
<dbReference type="InterPro" id="IPR029058">
    <property type="entry name" value="AB_hydrolase_fold"/>
</dbReference>
<dbReference type="InterPro" id="IPR005674">
    <property type="entry name" value="CocE/Ser_esterase"/>
</dbReference>
<dbReference type="InterPro" id="IPR008979">
    <property type="entry name" value="Galactose-bd-like_sf"/>
</dbReference>
<dbReference type="InterPro" id="IPR008252">
    <property type="entry name" value="Pept_S15_Xpro"/>
</dbReference>
<dbReference type="InterPro" id="IPR000383">
    <property type="entry name" value="Xaa-Pro-like_dom"/>
</dbReference>
<dbReference type="InterPro" id="IPR013736">
    <property type="entry name" value="Xaa-Pro_dipept_C"/>
</dbReference>
<dbReference type="NCBIfam" id="TIGR00976">
    <property type="entry name" value="CocE_NonD"/>
    <property type="match status" value="1"/>
</dbReference>
<dbReference type="NCBIfam" id="NF003780">
    <property type="entry name" value="PRK05371.1-1"/>
    <property type="match status" value="1"/>
</dbReference>
<dbReference type="Pfam" id="PF02129">
    <property type="entry name" value="Peptidase_S15"/>
    <property type="match status" value="1"/>
</dbReference>
<dbReference type="Pfam" id="PF08530">
    <property type="entry name" value="PepX_C"/>
    <property type="match status" value="1"/>
</dbReference>
<dbReference type="PRINTS" id="PR00923">
    <property type="entry name" value="LACTOPTASE"/>
</dbReference>
<dbReference type="SMART" id="SM00939">
    <property type="entry name" value="PepX_C"/>
    <property type="match status" value="1"/>
</dbReference>
<dbReference type="SUPFAM" id="SSF53474">
    <property type="entry name" value="alpha/beta-Hydrolases"/>
    <property type="match status" value="1"/>
</dbReference>
<dbReference type="SUPFAM" id="SSF49785">
    <property type="entry name" value="Galactose-binding domain-like"/>
    <property type="match status" value="1"/>
</dbReference>
<comment type="catalytic activity">
    <reaction>
        <text>Hydrolyzes Xaa-Pro-|- bonds to release unblocked, N-terminal dipeptides from substrates including Ala-Pro-|-p-nitroanilide and (sequentially) Tyr-Pro-|-Phe-Pro-|-Gly-Pro-|-Ile.</text>
        <dbReference type="EC" id="3.4.14.11"/>
    </reaction>
</comment>
<comment type="similarity">
    <text evidence="2">Belongs to the peptidase S15 family.</text>
</comment>
<gene>
    <name type="ordered locus">BA_2860</name>
    <name type="ordered locus">GBAA_2860</name>
    <name type="ordered locus">BAS2667</name>
</gene>
<protein>
    <recommendedName>
        <fullName>Putative Xaa-Pro dipeptidyl-peptidase</fullName>
        <shortName>X-Pro dipeptidyl-peptidase</shortName>
        <ecNumber>3.4.14.11</ecNumber>
    </recommendedName>
    <alternativeName>
        <fullName>X-prolyl-dipeptidyl aminopeptidase</fullName>
        <shortName>X-PDAP</shortName>
    </alternativeName>
</protein>
<feature type="chain" id="PRO_0000220236" description="Putative Xaa-Pro dipeptidyl-peptidase">
    <location>
        <begin position="1"/>
        <end position="597"/>
    </location>
</feature>
<feature type="active site" description="Charge relay system" evidence="1">
    <location>
        <position position="224"/>
    </location>
</feature>
<feature type="active site" description="Charge relay system" evidence="1">
    <location>
        <position position="336"/>
    </location>
</feature>
<feature type="active site" description="Charge relay system" evidence="1">
    <location>
        <position position="367"/>
    </location>
</feature>
<accession>Q81PE9</accession>
<accession>Q6HXL3</accession>
<accession>Q6KRN8</accession>